<feature type="chain" id="PRO_0000048413" description="Tubulin beta-2 chain">
    <location>
        <begin position="1"/>
        <end position="447"/>
    </location>
</feature>
<feature type="region of interest" description="Disordered" evidence="3">
    <location>
        <begin position="427"/>
        <end position="447"/>
    </location>
</feature>
<feature type="compositionally biased region" description="Acidic residues" evidence="3">
    <location>
        <begin position="432"/>
        <end position="447"/>
    </location>
</feature>
<feature type="binding site" evidence="2">
    <location>
        <position position="11"/>
    </location>
    <ligand>
        <name>GTP</name>
        <dbReference type="ChEBI" id="CHEBI:37565"/>
    </ligand>
</feature>
<feature type="binding site" evidence="1">
    <location>
        <position position="69"/>
    </location>
    <ligand>
        <name>GTP</name>
        <dbReference type="ChEBI" id="CHEBI:37565"/>
    </ligand>
</feature>
<feature type="binding site" evidence="1">
    <location>
        <position position="69"/>
    </location>
    <ligand>
        <name>Mg(2+)</name>
        <dbReference type="ChEBI" id="CHEBI:18420"/>
    </ligand>
</feature>
<feature type="binding site" evidence="2">
    <location>
        <position position="138"/>
    </location>
    <ligand>
        <name>GTP</name>
        <dbReference type="ChEBI" id="CHEBI:37565"/>
    </ligand>
</feature>
<feature type="binding site" evidence="2">
    <location>
        <position position="142"/>
    </location>
    <ligand>
        <name>GTP</name>
        <dbReference type="ChEBI" id="CHEBI:37565"/>
    </ligand>
</feature>
<feature type="binding site" evidence="2">
    <location>
        <position position="143"/>
    </location>
    <ligand>
        <name>GTP</name>
        <dbReference type="ChEBI" id="CHEBI:37565"/>
    </ligand>
</feature>
<feature type="binding site" evidence="2">
    <location>
        <position position="144"/>
    </location>
    <ligand>
        <name>GTP</name>
        <dbReference type="ChEBI" id="CHEBI:37565"/>
    </ligand>
</feature>
<feature type="binding site" evidence="2">
    <location>
        <position position="204"/>
    </location>
    <ligand>
        <name>GTP</name>
        <dbReference type="ChEBI" id="CHEBI:37565"/>
    </ligand>
</feature>
<feature type="binding site" evidence="2">
    <location>
        <position position="226"/>
    </location>
    <ligand>
        <name>GTP</name>
        <dbReference type="ChEBI" id="CHEBI:37565"/>
    </ligand>
</feature>
<accession>P40905</accession>
<dbReference type="EMBL" id="X81961">
    <property type="protein sequence ID" value="CAA57491.1"/>
    <property type="molecule type" value="mRNA"/>
</dbReference>
<dbReference type="PIR" id="S49328">
    <property type="entry name" value="S49328"/>
</dbReference>
<dbReference type="SMR" id="P40905"/>
<dbReference type="GO" id="GO:0005737">
    <property type="term" value="C:cytoplasm"/>
    <property type="evidence" value="ECO:0007669"/>
    <property type="project" value="UniProtKB-KW"/>
</dbReference>
<dbReference type="GO" id="GO:0005874">
    <property type="term" value="C:microtubule"/>
    <property type="evidence" value="ECO:0007669"/>
    <property type="project" value="UniProtKB-KW"/>
</dbReference>
<dbReference type="GO" id="GO:0005525">
    <property type="term" value="F:GTP binding"/>
    <property type="evidence" value="ECO:0007669"/>
    <property type="project" value="UniProtKB-KW"/>
</dbReference>
<dbReference type="GO" id="GO:0003924">
    <property type="term" value="F:GTPase activity"/>
    <property type="evidence" value="ECO:0007669"/>
    <property type="project" value="InterPro"/>
</dbReference>
<dbReference type="GO" id="GO:0046872">
    <property type="term" value="F:metal ion binding"/>
    <property type="evidence" value="ECO:0007669"/>
    <property type="project" value="UniProtKB-KW"/>
</dbReference>
<dbReference type="GO" id="GO:0005200">
    <property type="term" value="F:structural constituent of cytoskeleton"/>
    <property type="evidence" value="ECO:0007669"/>
    <property type="project" value="InterPro"/>
</dbReference>
<dbReference type="GO" id="GO:0007017">
    <property type="term" value="P:microtubule-based process"/>
    <property type="evidence" value="ECO:0007669"/>
    <property type="project" value="InterPro"/>
</dbReference>
<dbReference type="CDD" id="cd02187">
    <property type="entry name" value="beta_tubulin"/>
    <property type="match status" value="1"/>
</dbReference>
<dbReference type="FunFam" id="1.10.287.600:FF:000003">
    <property type="entry name" value="Tubulin beta chain"/>
    <property type="match status" value="1"/>
</dbReference>
<dbReference type="FunFam" id="3.30.1330.20:FF:000002">
    <property type="entry name" value="Tubulin beta chain"/>
    <property type="match status" value="1"/>
</dbReference>
<dbReference type="FunFam" id="3.40.50.1440:FF:000009">
    <property type="entry name" value="Tubulin beta chain"/>
    <property type="match status" value="1"/>
</dbReference>
<dbReference type="Gene3D" id="1.10.287.600">
    <property type="entry name" value="Helix hairpin bin"/>
    <property type="match status" value="1"/>
</dbReference>
<dbReference type="Gene3D" id="3.30.1330.20">
    <property type="entry name" value="Tubulin/FtsZ, C-terminal domain"/>
    <property type="match status" value="1"/>
</dbReference>
<dbReference type="Gene3D" id="3.40.50.1440">
    <property type="entry name" value="Tubulin/FtsZ, GTPase domain"/>
    <property type="match status" value="1"/>
</dbReference>
<dbReference type="InterPro" id="IPR013838">
    <property type="entry name" value="Beta-tubulin_BS"/>
</dbReference>
<dbReference type="InterPro" id="IPR002453">
    <property type="entry name" value="Beta_tubulin"/>
</dbReference>
<dbReference type="InterPro" id="IPR008280">
    <property type="entry name" value="Tub_FtsZ_C"/>
</dbReference>
<dbReference type="InterPro" id="IPR000217">
    <property type="entry name" value="Tubulin"/>
</dbReference>
<dbReference type="InterPro" id="IPR037103">
    <property type="entry name" value="Tubulin/FtsZ-like_C"/>
</dbReference>
<dbReference type="InterPro" id="IPR018316">
    <property type="entry name" value="Tubulin/FtsZ_2-layer-sand-dom"/>
</dbReference>
<dbReference type="InterPro" id="IPR036525">
    <property type="entry name" value="Tubulin/FtsZ_GTPase_sf"/>
</dbReference>
<dbReference type="InterPro" id="IPR023123">
    <property type="entry name" value="Tubulin_C"/>
</dbReference>
<dbReference type="InterPro" id="IPR017975">
    <property type="entry name" value="Tubulin_CS"/>
</dbReference>
<dbReference type="InterPro" id="IPR003008">
    <property type="entry name" value="Tubulin_FtsZ_GTPase"/>
</dbReference>
<dbReference type="PANTHER" id="PTHR11588">
    <property type="entry name" value="TUBULIN"/>
    <property type="match status" value="1"/>
</dbReference>
<dbReference type="Pfam" id="PF00091">
    <property type="entry name" value="Tubulin"/>
    <property type="match status" value="1"/>
</dbReference>
<dbReference type="Pfam" id="PF03953">
    <property type="entry name" value="Tubulin_C"/>
    <property type="match status" value="1"/>
</dbReference>
<dbReference type="PRINTS" id="PR01163">
    <property type="entry name" value="BETATUBULIN"/>
</dbReference>
<dbReference type="PRINTS" id="PR01161">
    <property type="entry name" value="TUBULIN"/>
</dbReference>
<dbReference type="SMART" id="SM00864">
    <property type="entry name" value="Tubulin"/>
    <property type="match status" value="1"/>
</dbReference>
<dbReference type="SMART" id="SM00865">
    <property type="entry name" value="Tubulin_C"/>
    <property type="match status" value="1"/>
</dbReference>
<dbReference type="SUPFAM" id="SSF55307">
    <property type="entry name" value="Tubulin C-terminal domain-like"/>
    <property type="match status" value="1"/>
</dbReference>
<dbReference type="SUPFAM" id="SSF52490">
    <property type="entry name" value="Tubulin nucleotide-binding domain-like"/>
    <property type="match status" value="1"/>
</dbReference>
<dbReference type="PROSITE" id="PS00227">
    <property type="entry name" value="TUBULIN"/>
    <property type="match status" value="1"/>
</dbReference>
<dbReference type="PROSITE" id="PS00228">
    <property type="entry name" value="TUBULIN_B_AUTOREG"/>
    <property type="match status" value="1"/>
</dbReference>
<organism>
    <name type="scientific">Erysiphe pisi</name>
    <name type="common">Pea powdery mildew</name>
    <dbReference type="NCBI Taxonomy" id="36044"/>
    <lineage>
        <taxon>Eukaryota</taxon>
        <taxon>Fungi</taxon>
        <taxon>Dikarya</taxon>
        <taxon>Ascomycota</taxon>
        <taxon>Pezizomycotina</taxon>
        <taxon>Leotiomycetes</taxon>
        <taxon>Erysiphales</taxon>
        <taxon>Erysiphaceae</taxon>
        <taxon>Erysiphe</taxon>
    </lineage>
</organism>
<protein>
    <recommendedName>
        <fullName>Tubulin beta-2 chain</fullName>
    </recommendedName>
    <alternativeName>
        <fullName>Beta-2-tubulin</fullName>
    </alternativeName>
</protein>
<reference key="1">
    <citation type="submission" date="1994-12" db="EMBL/GenBank/DDBJ databases">
        <authorList>
            <person name="Cannell M.E."/>
            <person name="Green J.R."/>
            <person name="Callow J.C."/>
        </authorList>
    </citation>
    <scope>NUCLEOTIDE SEQUENCE [MRNA]</scope>
</reference>
<keyword id="KW-0963">Cytoplasm</keyword>
<keyword id="KW-0206">Cytoskeleton</keyword>
<keyword id="KW-0342">GTP-binding</keyword>
<keyword id="KW-0460">Magnesium</keyword>
<keyword id="KW-0479">Metal-binding</keyword>
<keyword id="KW-0493">Microtubule</keyword>
<keyword id="KW-0547">Nucleotide-binding</keyword>
<sequence>MREIVHLQTGQCGNQIGAAFWQTISGEHGLDGSGVYNGTSDLQLERMNVYFNEASGNKYVPRAVLVDLEPGTMDAVRAGPFGQLFRPDNFVFGQSGAGNNWAKGHYTEGAELVDQVLDVVRREAEACDCLQGFQITHSLGGGTGAGMGTLLISKIREEFPDRMMATFSVVPSPKVSDTVVEPYNATLSVHQLVENSDETFCIDNEALYEICMRTLKLSNPSYGDLNHLVSAVMSGVTTCLRFPGQLNSDLRKLAVNMVPFPRLHFFMVGFAPLTSRGAHSFRAVTVPELTQQMYDPKNMMAASDFRNGRYLTCSAIFRGKVSMKEVEDQMRNVQNKNSAYFVEWIPNNVQTALCSIPPRGLKMSSTFVGNSTSIQELFKRVGDQFTAMFRRKAFLHWYTGEGMDEMEFTEAESNMNDLVHEYQQYQDASISEGEEEYEEEQQLENEE</sequence>
<gene>
    <name type="primary">TUB2</name>
</gene>
<name>TBB2_ERYPI</name>
<comment type="function">
    <text>Tubulin is the major constituent of microtubules, a cylinder consisting of laterally associated linear protofilaments composed of alpha- and beta-tubulin heterodimers. Microtubules grow by the addition of GTP-tubulin dimers to the microtubule end, where a stabilizing cap forms. Below the cap, tubulin dimers are in GDP-bound state, owing to GTPase activity of alpha-tubulin.</text>
</comment>
<comment type="cofactor">
    <cofactor evidence="1">
        <name>Mg(2+)</name>
        <dbReference type="ChEBI" id="CHEBI:18420"/>
    </cofactor>
</comment>
<comment type="subunit">
    <text>Dimer of alpha and beta chains. A typical microtubule is a hollow water-filled tube with an outer diameter of 25 nm and an inner diameter of 15 nM. Alpha-beta heterodimers associate head-to-tail to form protofilaments running lengthwise along the microtubule wall with the beta-tubulin subunit facing the microtubule plus end conferring a structural polarity. Microtubules usually have 13 protofilaments but different protofilament numbers can be found in some organisms and specialized cells.</text>
</comment>
<comment type="subcellular location">
    <subcellularLocation>
        <location>Cytoplasm</location>
        <location>Cytoskeleton</location>
    </subcellularLocation>
</comment>
<comment type="similarity">
    <text evidence="4">Belongs to the tubulin family.</text>
</comment>
<proteinExistence type="evidence at transcript level"/>
<evidence type="ECO:0000250" key="1">
    <source>
        <dbReference type="UniProtKB" id="P68363"/>
    </source>
</evidence>
<evidence type="ECO:0000250" key="2">
    <source>
        <dbReference type="UniProtKB" id="Q13509"/>
    </source>
</evidence>
<evidence type="ECO:0000256" key="3">
    <source>
        <dbReference type="SAM" id="MobiDB-lite"/>
    </source>
</evidence>
<evidence type="ECO:0000305" key="4"/>